<organism>
    <name type="scientific">Pongo abelii</name>
    <name type="common">Sumatran orangutan</name>
    <name type="synonym">Pongo pygmaeus abelii</name>
    <dbReference type="NCBI Taxonomy" id="9601"/>
    <lineage>
        <taxon>Eukaryota</taxon>
        <taxon>Metazoa</taxon>
        <taxon>Chordata</taxon>
        <taxon>Craniata</taxon>
        <taxon>Vertebrata</taxon>
        <taxon>Euteleostomi</taxon>
        <taxon>Mammalia</taxon>
        <taxon>Eutheria</taxon>
        <taxon>Euarchontoglires</taxon>
        <taxon>Primates</taxon>
        <taxon>Haplorrhini</taxon>
        <taxon>Catarrhini</taxon>
        <taxon>Hominidae</taxon>
        <taxon>Pongo</taxon>
    </lineage>
</organism>
<gene>
    <name type="primary">ACVRL1</name>
</gene>
<comment type="function">
    <text evidence="2">Type I receptor for TGF-beta family ligands BMP9/GDF2 and BMP10 and important regulator of normal blood vessel development. On ligand binding, forms a receptor complex consisting of two type II and two type I transmembrane serine/threonine kinases. Type II receptors phosphorylate and activate type I receptors which autophosphorylate, then bind and activate SMAD transcriptional regulators. May bind activin as well (By similarity).</text>
</comment>
<comment type="catalytic activity">
    <reaction>
        <text>L-threonyl-[receptor-protein] + ATP = O-phospho-L-threonyl-[receptor-protein] + ADP + H(+)</text>
        <dbReference type="Rhea" id="RHEA:44880"/>
        <dbReference type="Rhea" id="RHEA-COMP:11024"/>
        <dbReference type="Rhea" id="RHEA-COMP:11025"/>
        <dbReference type="ChEBI" id="CHEBI:15378"/>
        <dbReference type="ChEBI" id="CHEBI:30013"/>
        <dbReference type="ChEBI" id="CHEBI:30616"/>
        <dbReference type="ChEBI" id="CHEBI:61977"/>
        <dbReference type="ChEBI" id="CHEBI:456216"/>
        <dbReference type="EC" id="2.7.11.30"/>
    </reaction>
</comment>
<comment type="catalytic activity">
    <reaction>
        <text>L-seryl-[receptor-protein] + ATP = O-phospho-L-seryl-[receptor-protein] + ADP + H(+)</text>
        <dbReference type="Rhea" id="RHEA:18673"/>
        <dbReference type="Rhea" id="RHEA-COMP:11022"/>
        <dbReference type="Rhea" id="RHEA-COMP:11023"/>
        <dbReference type="ChEBI" id="CHEBI:15378"/>
        <dbReference type="ChEBI" id="CHEBI:29999"/>
        <dbReference type="ChEBI" id="CHEBI:30616"/>
        <dbReference type="ChEBI" id="CHEBI:83421"/>
        <dbReference type="ChEBI" id="CHEBI:456216"/>
        <dbReference type="EC" id="2.7.11.30"/>
    </reaction>
</comment>
<comment type="cofactor">
    <cofactor evidence="1">
        <name>Mg(2+)</name>
        <dbReference type="ChEBI" id="CHEBI:18420"/>
    </cofactor>
    <cofactor evidence="1">
        <name>Mn(2+)</name>
        <dbReference type="ChEBI" id="CHEBI:29035"/>
    </cofactor>
</comment>
<comment type="subunit">
    <text evidence="2">Interacts with TSC22D1/TSC-22.</text>
</comment>
<comment type="subcellular location">
    <subcellularLocation>
        <location evidence="2">Cell membrane</location>
        <topology evidence="4">Single-pass type I membrane protein</topology>
    </subcellularLocation>
</comment>
<comment type="similarity">
    <text evidence="8">Belongs to the protein kinase superfamily. TKL Ser/Thr protein kinase family. TGFB receptor subfamily.</text>
</comment>
<sequence length="503" mass="56200">MTLGSPRRGLLMLLMALVTQGDPVKPSRGPLVTCTCESPHCRGPTCRGAWCTVVLVREEGRHPQEHRGCGNLHRELCRGRPTEFVNHYCCDSHLCNHNVSLVLEATQSPSEQPGTDGQLALILGPVLALLALVALGVLGLWHVRRRQEKQRGLHSELGESSLILKASEQGDSMLGDLLDSDCTTGSGSGLPFLVQRTVARQVALVECVGKGRYGEVWRGLWHGESVAVKIFSSRDEQSWFRETEIYNTVLLRHDNILGFIASDMTSRNSSTQLWLITHYHEHGSLYDFLQRQTLEPHLALRLTVSAACGLAHLHVEIFGTQGKPAIAHRDFKSRNVLVKSNLQCCIADLGLAVMHSQGSDYLDIGNNPRVGTKRYMAPEVLDEQIRTDCFESYKWTDIWAFGLVLWEIARRTIVNGIVEDYRPPFYDVVPNDPSFEDMKKVVCVDQQTPTIPNRLAADPVLSGLAQMMRECWYPNPSARLTALRIKKTLQKISNSPEKPKVIQ</sequence>
<evidence type="ECO:0000250" key="1"/>
<evidence type="ECO:0000250" key="2">
    <source>
        <dbReference type="UniProtKB" id="P37023"/>
    </source>
</evidence>
<evidence type="ECO:0000250" key="3">
    <source>
        <dbReference type="UniProtKB" id="Q61288"/>
    </source>
</evidence>
<evidence type="ECO:0000255" key="4"/>
<evidence type="ECO:0000255" key="5">
    <source>
        <dbReference type="PROSITE-ProRule" id="PRU00159"/>
    </source>
</evidence>
<evidence type="ECO:0000255" key="6">
    <source>
        <dbReference type="PROSITE-ProRule" id="PRU00585"/>
    </source>
</evidence>
<evidence type="ECO:0000255" key="7">
    <source>
        <dbReference type="PROSITE-ProRule" id="PRU10027"/>
    </source>
</evidence>
<evidence type="ECO:0000305" key="8"/>
<dbReference type="EC" id="2.7.11.30"/>
<dbReference type="EMBL" id="CR858985">
    <property type="protein sequence ID" value="CAH91180.1"/>
    <property type="molecule type" value="mRNA"/>
</dbReference>
<dbReference type="RefSeq" id="NP_001125692.1">
    <property type="nucleotide sequence ID" value="NM_001132220.1"/>
</dbReference>
<dbReference type="BMRB" id="Q5RAN0"/>
<dbReference type="SMR" id="Q5RAN0"/>
<dbReference type="FunCoup" id="Q5RAN0">
    <property type="interactions" value="307"/>
</dbReference>
<dbReference type="STRING" id="9601.ENSPPYP00000005173"/>
<dbReference type="GlyCosmos" id="Q5RAN0">
    <property type="glycosylation" value="1 site, No reported glycans"/>
</dbReference>
<dbReference type="GeneID" id="100172614"/>
<dbReference type="KEGG" id="pon:100172614"/>
<dbReference type="CTD" id="94"/>
<dbReference type="eggNOG" id="KOG2052">
    <property type="taxonomic scope" value="Eukaryota"/>
</dbReference>
<dbReference type="InParanoid" id="Q5RAN0"/>
<dbReference type="OrthoDB" id="69842at2759"/>
<dbReference type="Proteomes" id="UP000001595">
    <property type="component" value="Unplaced"/>
</dbReference>
<dbReference type="GO" id="GO:0070724">
    <property type="term" value="C:BMP receptor complex"/>
    <property type="evidence" value="ECO:0007669"/>
    <property type="project" value="TreeGrafter"/>
</dbReference>
<dbReference type="GO" id="GO:0005886">
    <property type="term" value="C:plasma membrane"/>
    <property type="evidence" value="ECO:0000250"/>
    <property type="project" value="UniProtKB"/>
</dbReference>
<dbReference type="GO" id="GO:0005524">
    <property type="term" value="F:ATP binding"/>
    <property type="evidence" value="ECO:0007669"/>
    <property type="project" value="UniProtKB-KW"/>
</dbReference>
<dbReference type="GO" id="GO:0098821">
    <property type="term" value="F:BMP receptor activity"/>
    <property type="evidence" value="ECO:0000250"/>
    <property type="project" value="UniProtKB"/>
</dbReference>
<dbReference type="GO" id="GO:0046872">
    <property type="term" value="F:metal ion binding"/>
    <property type="evidence" value="ECO:0007669"/>
    <property type="project" value="UniProtKB-KW"/>
</dbReference>
<dbReference type="GO" id="GO:0001525">
    <property type="term" value="P:angiogenesis"/>
    <property type="evidence" value="ECO:0007669"/>
    <property type="project" value="UniProtKB-KW"/>
</dbReference>
<dbReference type="GO" id="GO:0007507">
    <property type="term" value="P:heart development"/>
    <property type="evidence" value="ECO:0007669"/>
    <property type="project" value="TreeGrafter"/>
</dbReference>
<dbReference type="GO" id="GO:0051239">
    <property type="term" value="P:regulation of multicellular organismal process"/>
    <property type="evidence" value="ECO:0007669"/>
    <property type="project" value="UniProtKB-ARBA"/>
</dbReference>
<dbReference type="GO" id="GO:0007179">
    <property type="term" value="P:transforming growth factor beta receptor signaling pathway"/>
    <property type="evidence" value="ECO:0007669"/>
    <property type="project" value="TreeGrafter"/>
</dbReference>
<dbReference type="CDD" id="cd14142">
    <property type="entry name" value="STKc_ACVR1_ALK1"/>
    <property type="match status" value="1"/>
</dbReference>
<dbReference type="CDD" id="cd23534">
    <property type="entry name" value="TFP_LU_ECD_ALK1"/>
    <property type="match status" value="1"/>
</dbReference>
<dbReference type="FunFam" id="1.10.510.10:FF:000018">
    <property type="entry name" value="Receptor protein serine/threonine kinase"/>
    <property type="match status" value="1"/>
</dbReference>
<dbReference type="FunFam" id="3.30.200.20:FF:000064">
    <property type="entry name" value="Receptor protein serine/threonine kinase"/>
    <property type="match status" value="1"/>
</dbReference>
<dbReference type="FunFam" id="2.10.60.10:FF:000014">
    <property type="entry name" value="Serine/threonine-protein kinase receptor R3"/>
    <property type="match status" value="1"/>
</dbReference>
<dbReference type="Gene3D" id="2.10.60.10">
    <property type="entry name" value="CD59"/>
    <property type="match status" value="1"/>
</dbReference>
<dbReference type="Gene3D" id="3.30.200.20">
    <property type="entry name" value="Phosphorylase Kinase, domain 1"/>
    <property type="match status" value="1"/>
</dbReference>
<dbReference type="Gene3D" id="1.10.510.10">
    <property type="entry name" value="Transferase(Phosphotransferase) domain 1"/>
    <property type="match status" value="1"/>
</dbReference>
<dbReference type="InterPro" id="IPR003605">
    <property type="entry name" value="GS_dom"/>
</dbReference>
<dbReference type="InterPro" id="IPR011009">
    <property type="entry name" value="Kinase-like_dom_sf"/>
</dbReference>
<dbReference type="InterPro" id="IPR000719">
    <property type="entry name" value="Prot_kinase_dom"/>
</dbReference>
<dbReference type="InterPro" id="IPR017441">
    <property type="entry name" value="Protein_kinase_ATP_BS"/>
</dbReference>
<dbReference type="InterPro" id="IPR001245">
    <property type="entry name" value="Ser-Thr/Tyr_kinase_cat_dom"/>
</dbReference>
<dbReference type="InterPro" id="IPR008271">
    <property type="entry name" value="Ser/Thr_kinase_AS"/>
</dbReference>
<dbReference type="InterPro" id="IPR045860">
    <property type="entry name" value="Snake_toxin-like_sf"/>
</dbReference>
<dbReference type="InterPro" id="IPR000333">
    <property type="entry name" value="TGFB_receptor"/>
</dbReference>
<dbReference type="PANTHER" id="PTHR23255:SF66">
    <property type="entry name" value="SERINE_THREONINE-PROTEIN KINASE RECEPTOR R3"/>
    <property type="match status" value="1"/>
</dbReference>
<dbReference type="PANTHER" id="PTHR23255">
    <property type="entry name" value="TRANSFORMING GROWTH FACTOR-BETA RECEPTOR TYPE I AND II"/>
    <property type="match status" value="1"/>
</dbReference>
<dbReference type="Pfam" id="PF07714">
    <property type="entry name" value="PK_Tyr_Ser-Thr"/>
    <property type="match status" value="1"/>
</dbReference>
<dbReference type="Pfam" id="PF08515">
    <property type="entry name" value="TGF_beta_GS"/>
    <property type="match status" value="1"/>
</dbReference>
<dbReference type="PRINTS" id="PR00653">
    <property type="entry name" value="ACTIVIN2R"/>
</dbReference>
<dbReference type="SMART" id="SM00467">
    <property type="entry name" value="GS"/>
    <property type="match status" value="1"/>
</dbReference>
<dbReference type="SUPFAM" id="SSF56112">
    <property type="entry name" value="Protein kinase-like (PK-like)"/>
    <property type="match status" value="1"/>
</dbReference>
<dbReference type="SUPFAM" id="SSF57302">
    <property type="entry name" value="Snake toxin-like"/>
    <property type="match status" value="1"/>
</dbReference>
<dbReference type="PROSITE" id="PS51256">
    <property type="entry name" value="GS"/>
    <property type="match status" value="1"/>
</dbReference>
<dbReference type="PROSITE" id="PS00107">
    <property type="entry name" value="PROTEIN_KINASE_ATP"/>
    <property type="match status" value="1"/>
</dbReference>
<dbReference type="PROSITE" id="PS50011">
    <property type="entry name" value="PROTEIN_KINASE_DOM"/>
    <property type="match status" value="1"/>
</dbReference>
<dbReference type="PROSITE" id="PS00108">
    <property type="entry name" value="PROTEIN_KINASE_ST"/>
    <property type="match status" value="1"/>
</dbReference>
<proteinExistence type="evidence at transcript level"/>
<accession>Q5RAN0</accession>
<protein>
    <recommendedName>
        <fullName evidence="8">Activin receptor type-1-like</fullName>
        <ecNumber>2.7.11.30</ecNumber>
    </recommendedName>
    <alternativeName>
        <fullName>Activin receptor-like kinase 1</fullName>
        <shortName>ALK-1</shortName>
    </alternativeName>
    <alternativeName>
        <fullName>Serine/threonine-protein kinase receptor R3</fullName>
        <shortName>SKR3</shortName>
    </alternativeName>
</protein>
<name>ACVL1_PONAB</name>
<keyword id="KW-0037">Angiogenesis</keyword>
<keyword id="KW-0067">ATP-binding</keyword>
<keyword id="KW-1003">Cell membrane</keyword>
<keyword id="KW-1015">Disulfide bond</keyword>
<keyword id="KW-0325">Glycoprotein</keyword>
<keyword id="KW-0418">Kinase</keyword>
<keyword id="KW-0460">Magnesium</keyword>
<keyword id="KW-0464">Manganese</keyword>
<keyword id="KW-0472">Membrane</keyword>
<keyword id="KW-0479">Metal-binding</keyword>
<keyword id="KW-0547">Nucleotide-binding</keyword>
<keyword id="KW-0597">Phosphoprotein</keyword>
<keyword id="KW-0675">Receptor</keyword>
<keyword id="KW-1185">Reference proteome</keyword>
<keyword id="KW-0723">Serine/threonine-protein kinase</keyword>
<keyword id="KW-0732">Signal</keyword>
<keyword id="KW-0808">Transferase</keyword>
<keyword id="KW-0812">Transmembrane</keyword>
<keyword id="KW-1133">Transmembrane helix</keyword>
<feature type="signal peptide" evidence="4">
    <location>
        <begin position="1"/>
        <end position="21"/>
    </location>
</feature>
<feature type="chain" id="PRO_0000234418" description="Activin receptor type-1-like">
    <location>
        <begin position="22"/>
        <end position="503"/>
    </location>
</feature>
<feature type="topological domain" description="Extracellular" evidence="4">
    <location>
        <begin position="22"/>
        <end position="118"/>
    </location>
</feature>
<feature type="transmembrane region" description="Helical" evidence="4">
    <location>
        <begin position="119"/>
        <end position="141"/>
    </location>
</feature>
<feature type="topological domain" description="Cytoplasmic" evidence="4">
    <location>
        <begin position="142"/>
        <end position="503"/>
    </location>
</feature>
<feature type="domain" description="GS" evidence="6">
    <location>
        <begin position="172"/>
        <end position="201"/>
    </location>
</feature>
<feature type="domain" description="Protein kinase" evidence="5">
    <location>
        <begin position="202"/>
        <end position="492"/>
    </location>
</feature>
<feature type="region of interest" description="Mediates specificity for BMP ligand" evidence="1">
    <location>
        <begin position="73"/>
        <end position="76"/>
    </location>
</feature>
<feature type="active site" description="Proton acceptor" evidence="5 7">
    <location>
        <position position="330"/>
    </location>
</feature>
<feature type="binding site" evidence="5">
    <location>
        <begin position="208"/>
        <end position="216"/>
    </location>
    <ligand>
        <name>ATP</name>
        <dbReference type="ChEBI" id="CHEBI:30616"/>
    </ligand>
</feature>
<feature type="binding site" evidence="5">
    <location>
        <position position="229"/>
    </location>
    <ligand>
        <name>ATP</name>
        <dbReference type="ChEBI" id="CHEBI:30616"/>
    </ligand>
</feature>
<feature type="modified residue" description="Phosphoserine" evidence="3">
    <location>
        <position position="155"/>
    </location>
</feature>
<feature type="modified residue" description="Phosphoserine" evidence="3">
    <location>
        <position position="160"/>
    </location>
</feature>
<feature type="modified residue" description="Phosphoserine" evidence="3">
    <location>
        <position position="161"/>
    </location>
</feature>
<feature type="glycosylation site" description="N-linked (GlcNAc...) asparagine" evidence="4">
    <location>
        <position position="98"/>
    </location>
</feature>
<feature type="disulfide bond" evidence="2">
    <location>
        <begin position="34"/>
        <end position="51"/>
    </location>
</feature>
<feature type="disulfide bond" evidence="2">
    <location>
        <begin position="36"/>
        <end position="41"/>
    </location>
</feature>
<feature type="disulfide bond" evidence="2">
    <location>
        <begin position="46"/>
        <end position="69"/>
    </location>
</feature>
<feature type="disulfide bond" evidence="2">
    <location>
        <begin position="77"/>
        <end position="89"/>
    </location>
</feature>
<feature type="disulfide bond" evidence="2">
    <location>
        <begin position="90"/>
        <end position="95"/>
    </location>
</feature>
<reference key="1">
    <citation type="submission" date="2004-11" db="EMBL/GenBank/DDBJ databases">
        <authorList>
            <consortium name="The German cDNA consortium"/>
        </authorList>
    </citation>
    <scope>NUCLEOTIDE SEQUENCE [LARGE SCALE MRNA]</scope>
    <source>
        <tissue>Brain cortex</tissue>
    </source>
</reference>